<sequence length="113" mass="13123">MNTVRVTFLLVFVLAVSLGQADKDENRMEMQEKTEQGKSYLDFAENLLLQKLEELEAKLLEEDSEESRNSRQKRCIGEGVPCDENDPRCCSGFVCLKPTLHGIWYKSYYCYKK</sequence>
<feature type="signal peptide" evidence="2">
    <location>
        <begin position="1"/>
        <end position="21"/>
    </location>
</feature>
<feature type="propeptide" id="PRO_0000400937" evidence="1">
    <location>
        <begin position="22"/>
        <end position="74"/>
    </location>
</feature>
<feature type="peptide" id="PRO_0000400938" description="U11-theraphotoxin-Hhn1k">
    <location>
        <begin position="75"/>
        <end position="113"/>
    </location>
</feature>
<feature type="region of interest" description="Disordered" evidence="3">
    <location>
        <begin position="61"/>
        <end position="83"/>
    </location>
</feature>
<feature type="disulfide bond" evidence="1">
    <location>
        <begin position="75"/>
        <end position="90"/>
    </location>
</feature>
<feature type="disulfide bond" evidence="1">
    <location>
        <begin position="82"/>
        <end position="95"/>
    </location>
</feature>
<feature type="disulfide bond" evidence="1">
    <location>
        <begin position="89"/>
        <end position="110"/>
    </location>
</feature>
<accession>D2Y281</accession>
<evidence type="ECO:0000250" key="1"/>
<evidence type="ECO:0000255" key="2"/>
<evidence type="ECO:0000256" key="3">
    <source>
        <dbReference type="SAM" id="MobiDB-lite"/>
    </source>
</evidence>
<evidence type="ECO:0000305" key="4"/>
<organism>
    <name type="scientific">Cyriopagopus hainanus</name>
    <name type="common">Chinese bird spider</name>
    <name type="synonym">Haplopelma hainanum</name>
    <dbReference type="NCBI Taxonomy" id="209901"/>
    <lineage>
        <taxon>Eukaryota</taxon>
        <taxon>Metazoa</taxon>
        <taxon>Ecdysozoa</taxon>
        <taxon>Arthropoda</taxon>
        <taxon>Chelicerata</taxon>
        <taxon>Arachnida</taxon>
        <taxon>Araneae</taxon>
        <taxon>Mygalomorphae</taxon>
        <taxon>Theraphosidae</taxon>
        <taxon>Haplopelma</taxon>
    </lineage>
</organism>
<keyword id="KW-1015">Disulfide bond</keyword>
<keyword id="KW-0872">Ion channel impairing toxin</keyword>
<keyword id="KW-0960">Knottin</keyword>
<keyword id="KW-0964">Secreted</keyword>
<keyword id="KW-0732">Signal</keyword>
<keyword id="KW-0800">Toxin</keyword>
<dbReference type="EMBL" id="GU292958">
    <property type="protein sequence ID" value="ADB56774.1"/>
    <property type="molecule type" value="mRNA"/>
</dbReference>
<dbReference type="ArachnoServer" id="AS001577">
    <property type="toxin name" value="U11-theraphotoxin-Hhn1k"/>
</dbReference>
<dbReference type="GO" id="GO:0005576">
    <property type="term" value="C:extracellular region"/>
    <property type="evidence" value="ECO:0007669"/>
    <property type="project" value="UniProtKB-SubCell"/>
</dbReference>
<dbReference type="GO" id="GO:0019871">
    <property type="term" value="F:sodium channel inhibitor activity"/>
    <property type="evidence" value="ECO:0007669"/>
    <property type="project" value="InterPro"/>
</dbReference>
<dbReference type="GO" id="GO:0090729">
    <property type="term" value="F:toxin activity"/>
    <property type="evidence" value="ECO:0007669"/>
    <property type="project" value="UniProtKB-KW"/>
</dbReference>
<dbReference type="InterPro" id="IPR012627">
    <property type="entry name" value="Toxin_22"/>
</dbReference>
<dbReference type="Pfam" id="PF08092">
    <property type="entry name" value="Toxin_22"/>
    <property type="match status" value="1"/>
</dbReference>
<name>H16K1_CYRHA</name>
<proteinExistence type="evidence at transcript level"/>
<protein>
    <recommendedName>
        <fullName>U11-theraphotoxin-Hhn1k</fullName>
        <shortName>U11-TRTX-Hhn1k</shortName>
    </recommendedName>
    <alternativeName>
        <fullName>Hainantoxin-XVI-11</fullName>
        <shortName>HNTX-XVI-11</shortName>
    </alternativeName>
</protein>
<reference key="1">
    <citation type="journal article" date="2010" name="J. Proteome Res.">
        <title>Molecular diversification of peptide toxins from the tarantula Haplopelma hainanum (Ornithoctonus hainana) venom based on transcriptomic, peptidomic, and genomic analyses.</title>
        <authorList>
            <person name="Tang X."/>
            <person name="Zhang Y."/>
            <person name="Hu W."/>
            <person name="Xu D."/>
            <person name="Tao H."/>
            <person name="Yang X."/>
            <person name="Li Y."/>
            <person name="Jiang L."/>
            <person name="Liang S."/>
        </authorList>
    </citation>
    <scope>NUCLEOTIDE SEQUENCE [LARGE SCALE MRNA]</scope>
    <source>
        <tissue>Venom gland</tissue>
    </source>
</reference>
<comment type="function">
    <text evidence="1">Probable ion channel inhibitor.</text>
</comment>
<comment type="subcellular location">
    <subcellularLocation>
        <location evidence="1">Secreted</location>
    </subcellularLocation>
</comment>
<comment type="tissue specificity">
    <text>Expressed by the venom gland.</text>
</comment>
<comment type="domain">
    <text evidence="1">The presence of a 'disulfide through disulfide knot' structurally defines this protein as a knottin.</text>
</comment>
<comment type="similarity">
    <text evidence="4">Belongs to the neurotoxin 14 (magi-1) family. 01 (HNTX-16) subfamily.</text>
</comment>